<organism>
    <name type="scientific">Homo sapiens</name>
    <name type="common">Human</name>
    <dbReference type="NCBI Taxonomy" id="9606"/>
    <lineage>
        <taxon>Eukaryota</taxon>
        <taxon>Metazoa</taxon>
        <taxon>Chordata</taxon>
        <taxon>Craniata</taxon>
        <taxon>Vertebrata</taxon>
        <taxon>Euteleostomi</taxon>
        <taxon>Mammalia</taxon>
        <taxon>Eutheria</taxon>
        <taxon>Euarchontoglires</taxon>
        <taxon>Primates</taxon>
        <taxon>Haplorrhini</taxon>
        <taxon>Catarrhini</taxon>
        <taxon>Hominidae</taxon>
        <taxon>Homo</taxon>
    </lineage>
</organism>
<evidence type="ECO:0000256" key="1">
    <source>
        <dbReference type="SAM" id="MobiDB-lite"/>
    </source>
</evidence>
<evidence type="ECO:0000269" key="2">
    <source>
    </source>
</evidence>
<evidence type="ECO:0000269" key="3">
    <source>
    </source>
</evidence>
<evidence type="ECO:0000269" key="4">
    <source>
    </source>
</evidence>
<evidence type="ECO:0000269" key="5">
    <source>
    </source>
</evidence>
<evidence type="ECO:0000269" key="6">
    <source>
    </source>
</evidence>
<evidence type="ECO:0000303" key="7">
    <source>
    </source>
</evidence>
<evidence type="ECO:0000303" key="8">
    <source>
    </source>
</evidence>
<evidence type="ECO:0000305" key="9"/>
<evidence type="ECO:0007744" key="10">
    <source>
    </source>
</evidence>
<evidence type="ECO:0007744" key="11">
    <source>
    </source>
</evidence>
<evidence type="ECO:0007744" key="12">
    <source>
    </source>
</evidence>
<evidence type="ECO:0007744" key="13">
    <source>
    </source>
</evidence>
<evidence type="ECO:0007744" key="14">
    <source>
    </source>
</evidence>
<evidence type="ECO:0007829" key="15">
    <source>
        <dbReference type="PDB" id="4FO0"/>
    </source>
</evidence>
<gene>
    <name type="primary">ACTR8</name>
    <name type="synonym">ARP8</name>
    <name type="synonym">INO80N</name>
</gene>
<accession>Q9H981</accession>
<accession>B3KSW7</accession>
<accession>Q8N566</accession>
<accession>Q9H663</accession>
<reference key="1">
    <citation type="journal article" date="2004" name="Nat. Genet.">
        <title>Complete sequencing and characterization of 21,243 full-length human cDNAs.</title>
        <authorList>
            <person name="Ota T."/>
            <person name="Suzuki Y."/>
            <person name="Nishikawa T."/>
            <person name="Otsuki T."/>
            <person name="Sugiyama T."/>
            <person name="Irie R."/>
            <person name="Wakamatsu A."/>
            <person name="Hayashi K."/>
            <person name="Sato H."/>
            <person name="Nagai K."/>
            <person name="Kimura K."/>
            <person name="Makita H."/>
            <person name="Sekine M."/>
            <person name="Obayashi M."/>
            <person name="Nishi T."/>
            <person name="Shibahara T."/>
            <person name="Tanaka T."/>
            <person name="Ishii S."/>
            <person name="Yamamoto J."/>
            <person name="Saito K."/>
            <person name="Kawai Y."/>
            <person name="Isono Y."/>
            <person name="Nakamura Y."/>
            <person name="Nagahari K."/>
            <person name="Murakami K."/>
            <person name="Yasuda T."/>
            <person name="Iwayanagi T."/>
            <person name="Wagatsuma M."/>
            <person name="Shiratori A."/>
            <person name="Sudo H."/>
            <person name="Hosoiri T."/>
            <person name="Kaku Y."/>
            <person name="Kodaira H."/>
            <person name="Kondo H."/>
            <person name="Sugawara M."/>
            <person name="Takahashi M."/>
            <person name="Kanda K."/>
            <person name="Yokoi T."/>
            <person name="Furuya T."/>
            <person name="Kikkawa E."/>
            <person name="Omura Y."/>
            <person name="Abe K."/>
            <person name="Kamihara K."/>
            <person name="Katsuta N."/>
            <person name="Sato K."/>
            <person name="Tanikawa M."/>
            <person name="Yamazaki M."/>
            <person name="Ninomiya K."/>
            <person name="Ishibashi T."/>
            <person name="Yamashita H."/>
            <person name="Murakawa K."/>
            <person name="Fujimori K."/>
            <person name="Tanai H."/>
            <person name="Kimata M."/>
            <person name="Watanabe M."/>
            <person name="Hiraoka S."/>
            <person name="Chiba Y."/>
            <person name="Ishida S."/>
            <person name="Ono Y."/>
            <person name="Takiguchi S."/>
            <person name="Watanabe S."/>
            <person name="Yosida M."/>
            <person name="Hotuta T."/>
            <person name="Kusano J."/>
            <person name="Kanehori K."/>
            <person name="Takahashi-Fujii A."/>
            <person name="Hara H."/>
            <person name="Tanase T.-O."/>
            <person name="Nomura Y."/>
            <person name="Togiya S."/>
            <person name="Komai F."/>
            <person name="Hara R."/>
            <person name="Takeuchi K."/>
            <person name="Arita M."/>
            <person name="Imose N."/>
            <person name="Musashino K."/>
            <person name="Yuuki H."/>
            <person name="Oshima A."/>
            <person name="Sasaki N."/>
            <person name="Aotsuka S."/>
            <person name="Yoshikawa Y."/>
            <person name="Matsunawa H."/>
            <person name="Ichihara T."/>
            <person name="Shiohata N."/>
            <person name="Sano S."/>
            <person name="Moriya S."/>
            <person name="Momiyama H."/>
            <person name="Satoh N."/>
            <person name="Takami S."/>
            <person name="Terashima Y."/>
            <person name="Suzuki O."/>
            <person name="Nakagawa S."/>
            <person name="Senoh A."/>
            <person name="Mizoguchi H."/>
            <person name="Goto Y."/>
            <person name="Shimizu F."/>
            <person name="Wakebe H."/>
            <person name="Hishigaki H."/>
            <person name="Watanabe T."/>
            <person name="Sugiyama A."/>
            <person name="Takemoto M."/>
            <person name="Kawakami B."/>
            <person name="Yamazaki M."/>
            <person name="Watanabe K."/>
            <person name="Kumagai A."/>
            <person name="Itakura S."/>
            <person name="Fukuzumi Y."/>
            <person name="Fujimori Y."/>
            <person name="Komiyama M."/>
            <person name="Tashiro H."/>
            <person name="Tanigami A."/>
            <person name="Fujiwara T."/>
            <person name="Ono T."/>
            <person name="Yamada K."/>
            <person name="Fujii Y."/>
            <person name="Ozaki K."/>
            <person name="Hirao M."/>
            <person name="Ohmori Y."/>
            <person name="Kawabata A."/>
            <person name="Hikiji T."/>
            <person name="Kobatake N."/>
            <person name="Inagaki H."/>
            <person name="Ikema Y."/>
            <person name="Okamoto S."/>
            <person name="Okitani R."/>
            <person name="Kawakami T."/>
            <person name="Noguchi S."/>
            <person name="Itoh T."/>
            <person name="Shigeta K."/>
            <person name="Senba T."/>
            <person name="Matsumura K."/>
            <person name="Nakajima Y."/>
            <person name="Mizuno T."/>
            <person name="Morinaga M."/>
            <person name="Sasaki M."/>
            <person name="Togashi T."/>
            <person name="Oyama M."/>
            <person name="Hata H."/>
            <person name="Watanabe M."/>
            <person name="Komatsu T."/>
            <person name="Mizushima-Sugano J."/>
            <person name="Satoh T."/>
            <person name="Shirai Y."/>
            <person name="Takahashi Y."/>
            <person name="Nakagawa K."/>
            <person name="Okumura K."/>
            <person name="Nagase T."/>
            <person name="Nomura N."/>
            <person name="Kikuchi H."/>
            <person name="Masuho Y."/>
            <person name="Yamashita R."/>
            <person name="Nakai K."/>
            <person name="Yada T."/>
            <person name="Nakamura Y."/>
            <person name="Ohara O."/>
            <person name="Isogai T."/>
            <person name="Sugano S."/>
        </authorList>
    </citation>
    <scope>NUCLEOTIDE SEQUENCE [LARGE SCALE MRNA] (ISOFORMS 1 AND 2)</scope>
    <source>
        <tissue>Brain cortex</tissue>
        <tissue>Small intestine</tissue>
    </source>
</reference>
<reference key="2">
    <citation type="journal article" date="2006" name="Nature">
        <title>The DNA sequence, annotation and analysis of human chromosome 3.</title>
        <authorList>
            <person name="Muzny D.M."/>
            <person name="Scherer S.E."/>
            <person name="Kaul R."/>
            <person name="Wang J."/>
            <person name="Yu J."/>
            <person name="Sudbrak R."/>
            <person name="Buhay C.J."/>
            <person name="Chen R."/>
            <person name="Cree A."/>
            <person name="Ding Y."/>
            <person name="Dugan-Rocha S."/>
            <person name="Gill R."/>
            <person name="Gunaratne P."/>
            <person name="Harris R.A."/>
            <person name="Hawes A.C."/>
            <person name="Hernandez J."/>
            <person name="Hodgson A.V."/>
            <person name="Hume J."/>
            <person name="Jackson A."/>
            <person name="Khan Z.M."/>
            <person name="Kovar-Smith C."/>
            <person name="Lewis L.R."/>
            <person name="Lozado R.J."/>
            <person name="Metzker M.L."/>
            <person name="Milosavljevic A."/>
            <person name="Miner G.R."/>
            <person name="Morgan M.B."/>
            <person name="Nazareth L.V."/>
            <person name="Scott G."/>
            <person name="Sodergren E."/>
            <person name="Song X.-Z."/>
            <person name="Steffen D."/>
            <person name="Wei S."/>
            <person name="Wheeler D.A."/>
            <person name="Wright M.W."/>
            <person name="Worley K.C."/>
            <person name="Yuan Y."/>
            <person name="Zhang Z."/>
            <person name="Adams C.Q."/>
            <person name="Ansari-Lari M.A."/>
            <person name="Ayele M."/>
            <person name="Brown M.J."/>
            <person name="Chen G."/>
            <person name="Chen Z."/>
            <person name="Clendenning J."/>
            <person name="Clerc-Blankenburg K.P."/>
            <person name="Chen R."/>
            <person name="Chen Z."/>
            <person name="Davis C."/>
            <person name="Delgado O."/>
            <person name="Dinh H.H."/>
            <person name="Dong W."/>
            <person name="Draper H."/>
            <person name="Ernst S."/>
            <person name="Fu G."/>
            <person name="Gonzalez-Garay M.L."/>
            <person name="Garcia D.K."/>
            <person name="Gillett W."/>
            <person name="Gu J."/>
            <person name="Hao B."/>
            <person name="Haugen E."/>
            <person name="Havlak P."/>
            <person name="He X."/>
            <person name="Hennig S."/>
            <person name="Hu S."/>
            <person name="Huang W."/>
            <person name="Jackson L.R."/>
            <person name="Jacob L.S."/>
            <person name="Kelly S.H."/>
            <person name="Kube M."/>
            <person name="Levy R."/>
            <person name="Li Z."/>
            <person name="Liu B."/>
            <person name="Liu J."/>
            <person name="Liu W."/>
            <person name="Lu J."/>
            <person name="Maheshwari M."/>
            <person name="Nguyen B.-V."/>
            <person name="Okwuonu G.O."/>
            <person name="Palmeiri A."/>
            <person name="Pasternak S."/>
            <person name="Perez L.M."/>
            <person name="Phelps K.A."/>
            <person name="Plopper F.J."/>
            <person name="Qiang B."/>
            <person name="Raymond C."/>
            <person name="Rodriguez R."/>
            <person name="Saenphimmachak C."/>
            <person name="Santibanez J."/>
            <person name="Shen H."/>
            <person name="Shen Y."/>
            <person name="Subramanian S."/>
            <person name="Tabor P.E."/>
            <person name="Verduzco D."/>
            <person name="Waldron L."/>
            <person name="Wang J."/>
            <person name="Wang J."/>
            <person name="Wang Q."/>
            <person name="Williams G.A."/>
            <person name="Wong G.K.-S."/>
            <person name="Yao Z."/>
            <person name="Zhang J."/>
            <person name="Zhang X."/>
            <person name="Zhao G."/>
            <person name="Zhou J."/>
            <person name="Zhou Y."/>
            <person name="Nelson D."/>
            <person name="Lehrach H."/>
            <person name="Reinhardt R."/>
            <person name="Naylor S.L."/>
            <person name="Yang H."/>
            <person name="Olson M."/>
            <person name="Weinstock G."/>
            <person name="Gibbs R.A."/>
        </authorList>
    </citation>
    <scope>NUCLEOTIDE SEQUENCE [LARGE SCALE GENOMIC DNA]</scope>
</reference>
<reference key="3">
    <citation type="journal article" date="2004" name="Genome Res.">
        <title>The status, quality, and expansion of the NIH full-length cDNA project: the Mammalian Gene Collection (MGC).</title>
        <authorList>
            <consortium name="The MGC Project Team"/>
        </authorList>
    </citation>
    <scope>NUCLEOTIDE SEQUENCE [LARGE SCALE MRNA] (ISOFORM 3)</scope>
    <source>
        <tissue>Testis</tissue>
    </source>
</reference>
<reference key="4">
    <citation type="journal article" date="2005" name="J. Biol. Chem.">
        <title>A mammalian chromatin remodeling complex with similarities to the yeast INO80 complex.</title>
        <authorList>
            <person name="Jin J."/>
            <person name="Cai Y."/>
            <person name="Yao T."/>
            <person name="Gottschalk A.J."/>
            <person name="Florens L."/>
            <person name="Swanson S.K."/>
            <person name="Gutierrez J.L."/>
            <person name="Coleman M.K."/>
            <person name="Workman J.L."/>
            <person name="Mushegian A."/>
            <person name="Washburn M.P."/>
            <person name="Conaway R.C."/>
            <person name="Conaway J.W."/>
        </authorList>
    </citation>
    <scope>IDENTIFICATION IN INO80 COMPLEX</scope>
    <scope>IDENTIFICATION BY MASS SPECTROMETRY</scope>
</reference>
<reference key="5">
    <citation type="journal article" date="2006" name="Cell">
        <title>Global, in vivo, and site-specific phosphorylation dynamics in signaling networks.</title>
        <authorList>
            <person name="Olsen J.V."/>
            <person name="Blagoev B."/>
            <person name="Gnad F."/>
            <person name="Macek B."/>
            <person name="Kumar C."/>
            <person name="Mortensen P."/>
            <person name="Mann M."/>
        </authorList>
    </citation>
    <scope>PHOSPHORYLATION [LARGE SCALE ANALYSIS] AT SER-132</scope>
    <scope>IDENTIFICATION BY MASS SPECTROMETRY [LARGE SCALE ANALYSIS]</scope>
    <source>
        <tissue>Cervix carcinoma</tissue>
    </source>
</reference>
<reference key="6">
    <citation type="journal article" date="2008" name="Exp. Cell Res.">
        <title>The actin-related protein hArp8 accumulates on the mitotic chromosomes and functions in chromosome alignment.</title>
        <authorList>
            <person name="Aoyama N."/>
            <person name="Oka A."/>
            <person name="Kitayama K."/>
            <person name="Kurumizaka H."/>
            <person name="Harata M."/>
        </authorList>
    </citation>
    <scope>FUNCTION IN MITOSIS</scope>
    <scope>INTERACTION WITH ACTR5</scope>
    <scope>SUBCELLULAR LOCATION</scope>
</reference>
<reference key="7">
    <citation type="journal article" date="2008" name="Mol. Cell">
        <title>Distinct modes of regulation of the Uch37 deubiquitinating enzyme in the proteasome and in the Ino80 chromatin-remodeling complex.</title>
        <authorList>
            <person name="Yao T."/>
            <person name="Song L."/>
            <person name="Jin J."/>
            <person name="Cai Y."/>
            <person name="Takahashi H."/>
            <person name="Swanson S.K."/>
            <person name="Washburn M.P."/>
            <person name="Florens L."/>
            <person name="Conaway R.C."/>
            <person name="Cohen R.E."/>
            <person name="Conaway J.W."/>
        </authorList>
    </citation>
    <scope>IDENTIFICATION IN THE INO80 COMPLEX</scope>
    <scope>IDENTIFICATION BY MASS SPECTROMETRY</scope>
</reference>
<reference key="8">
    <citation type="journal article" date="2008" name="Proc. Natl. Acad. Sci. U.S.A.">
        <title>A quantitative atlas of mitotic phosphorylation.</title>
        <authorList>
            <person name="Dephoure N."/>
            <person name="Zhou C."/>
            <person name="Villen J."/>
            <person name="Beausoleil S.A."/>
            <person name="Bakalarski C.E."/>
            <person name="Elledge S.J."/>
            <person name="Gygi S.P."/>
        </authorList>
    </citation>
    <scope>PHOSPHORYLATION [LARGE SCALE ANALYSIS] AT SER-412</scope>
    <scope>IDENTIFICATION BY MASS SPECTROMETRY [LARGE SCALE ANALYSIS]</scope>
    <source>
        <tissue>Cervix carcinoma</tissue>
    </source>
</reference>
<reference key="9">
    <citation type="journal article" date="2010" name="Sci. Signal.">
        <title>Quantitative phosphoproteomics reveals widespread full phosphorylation site occupancy during mitosis.</title>
        <authorList>
            <person name="Olsen J.V."/>
            <person name="Vermeulen M."/>
            <person name="Santamaria A."/>
            <person name="Kumar C."/>
            <person name="Miller M.L."/>
            <person name="Jensen L.J."/>
            <person name="Gnad F."/>
            <person name="Cox J."/>
            <person name="Jensen T.S."/>
            <person name="Nigg E.A."/>
            <person name="Brunak S."/>
            <person name="Mann M."/>
        </authorList>
    </citation>
    <scope>PHOSPHORYLATION [LARGE SCALE ANALYSIS] AT SER-412</scope>
    <scope>IDENTIFICATION BY MASS SPECTROMETRY [LARGE SCALE ANALYSIS]</scope>
    <source>
        <tissue>Cervix carcinoma</tissue>
    </source>
</reference>
<reference key="10">
    <citation type="journal article" date="2011" name="J. Biol. Chem.">
        <title>Subunit organization of the human INO80 chromatin remodeling complex: An evolutionarily conserved core complex catalyzes ATP-dependent nucleosome remodeling.</title>
        <authorList>
            <person name="Chen L."/>
            <person name="Cai Y."/>
            <person name="Jin J."/>
            <person name="Florens L."/>
            <person name="Swanson S.K."/>
            <person name="Washburn M.P."/>
            <person name="Conaway J.W."/>
            <person name="Conaway R.C."/>
        </authorList>
    </citation>
    <scope>IDENTIFICATION IN THE INO80 COMPLEX</scope>
</reference>
<reference key="11">
    <citation type="journal article" date="2012" name="Proc. Natl. Acad. Sci. U.S.A.">
        <title>N-terminal acetylome analyses and functional insights of the N-terminal acetyltransferase NatB.</title>
        <authorList>
            <person name="Van Damme P."/>
            <person name="Lasa M."/>
            <person name="Polevoda B."/>
            <person name="Gazquez C."/>
            <person name="Elosegui-Artola A."/>
            <person name="Kim D.S."/>
            <person name="De Juan-Pardo E."/>
            <person name="Demeyer K."/>
            <person name="Hole K."/>
            <person name="Larrea E."/>
            <person name="Timmerman E."/>
            <person name="Prieto J."/>
            <person name="Arnesen T."/>
            <person name="Sherman F."/>
            <person name="Gevaert K."/>
            <person name="Aldabe R."/>
        </authorList>
    </citation>
    <scope>ACETYLATION [LARGE SCALE ANALYSIS] AT MET-1</scope>
    <scope>IDENTIFICATION BY MASS SPECTROMETRY [LARGE SCALE ANALYSIS]</scope>
</reference>
<reference key="12">
    <citation type="journal article" date="2013" name="J. Proteome Res.">
        <title>Toward a comprehensive characterization of a human cancer cell phosphoproteome.</title>
        <authorList>
            <person name="Zhou H."/>
            <person name="Di Palma S."/>
            <person name="Preisinger C."/>
            <person name="Peng M."/>
            <person name="Polat A.N."/>
            <person name="Heck A.J."/>
            <person name="Mohammed S."/>
        </authorList>
    </citation>
    <scope>PHOSPHORYLATION [LARGE SCALE ANALYSIS] AT SER-132 AND SER-412</scope>
    <scope>IDENTIFICATION BY MASS SPECTROMETRY [LARGE SCALE ANALYSIS]</scope>
    <source>
        <tissue>Cervix carcinoma</tissue>
        <tissue>Erythroleukemia</tissue>
    </source>
</reference>
<reference key="13">
    <citation type="journal article" date="2012" name="Nucleic Acids Res.">
        <title>Structure of Actin-related protein 8 and its contribution to nucleosome binding.</title>
        <authorList>
            <person name="Gerhold C.B."/>
            <person name="Winkler D.D."/>
            <person name="Lakomek K."/>
            <person name="Seifert F.U."/>
            <person name="Fenn S."/>
            <person name="Kessler B."/>
            <person name="Witte G."/>
            <person name="Luger K."/>
            <person name="Hopfner K.P."/>
        </authorList>
    </citation>
    <scope>X-RAY CRYSTALLOGRAPHY (2.6 ANGSTROMS) OF 34-624</scope>
    <scope>FUNCTION</scope>
    <scope>SUBUNIT</scope>
    <scope>ATP-BINDING SITES</scope>
</reference>
<name>ARP8_HUMAN</name>
<feature type="chain" id="PRO_0000089123" description="Actin-related protein 8">
    <location>
        <begin position="1"/>
        <end position="624"/>
    </location>
</feature>
<feature type="region of interest" description="Disordered" evidence="1">
    <location>
        <begin position="1"/>
        <end position="29"/>
    </location>
</feature>
<feature type="region of interest" description="Disordered" evidence="1">
    <location>
        <begin position="430"/>
        <end position="462"/>
    </location>
</feature>
<feature type="compositionally biased region" description="Basic and acidic residues" evidence="1">
    <location>
        <begin position="1"/>
        <end position="25"/>
    </location>
</feature>
<feature type="binding site">
    <location>
        <position position="55"/>
    </location>
    <ligand>
        <name>ATP</name>
        <dbReference type="ChEBI" id="CHEBI:30616"/>
    </ligand>
</feature>
<feature type="binding site">
    <location>
        <position position="56"/>
    </location>
    <ligand>
        <name>ATP</name>
        <dbReference type="ChEBI" id="CHEBI:30616"/>
    </ligand>
</feature>
<feature type="binding site">
    <location>
        <begin position="283"/>
        <end position="286"/>
    </location>
    <ligand>
        <name>ATP</name>
        <dbReference type="ChEBI" id="CHEBI:30616"/>
    </ligand>
</feature>
<feature type="modified residue" description="N-acetylmethionine" evidence="13">
    <location>
        <position position="1"/>
    </location>
</feature>
<feature type="modified residue" description="Phosphoserine" evidence="10 14">
    <location>
        <position position="132"/>
    </location>
</feature>
<feature type="modified residue" description="Phosphoserine" evidence="11 12 14">
    <location>
        <position position="412"/>
    </location>
</feature>
<feature type="splice variant" id="VSP_040506" description="In isoform 3." evidence="8">
    <location>
        <begin position="1"/>
        <end position="250"/>
    </location>
</feature>
<feature type="splice variant" id="VSP_040507" description="In isoform 2." evidence="7">
    <location>
        <begin position="1"/>
        <end position="111"/>
    </location>
</feature>
<feature type="splice variant" id="VSP_040508" description="In isoform 3." evidence="8">
    <original>LCLAYGGSDVSRCFYWLMQRAGFPYRECQLTNKMDCLLLQHLKETFCHLD</original>
    <variation>IFSWN</variation>
    <location>
        <begin position="305"/>
        <end position="354"/>
    </location>
</feature>
<feature type="sequence variant" id="VAR_028033" description="In dbSNP:rs3733082.">
    <original>T</original>
    <variation>I</variation>
    <location>
        <position position="56"/>
    </location>
</feature>
<feature type="sequence conflict" description="In Ref. 1; BAB14352." evidence="9" ref="1">
    <original>D</original>
    <variation>G</variation>
    <location>
        <position position="596"/>
    </location>
</feature>
<feature type="helix" evidence="15">
    <location>
        <begin position="37"/>
        <end position="39"/>
    </location>
</feature>
<feature type="turn" evidence="15">
    <location>
        <begin position="40"/>
        <end position="42"/>
    </location>
</feature>
<feature type="helix" evidence="15">
    <location>
        <begin position="44"/>
        <end position="46"/>
    </location>
</feature>
<feature type="strand" evidence="15">
    <location>
        <begin position="47"/>
        <end position="52"/>
    </location>
</feature>
<feature type="strand" evidence="15">
    <location>
        <begin position="55"/>
        <end position="62"/>
    </location>
</feature>
<feature type="strand" evidence="15">
    <location>
        <begin position="69"/>
        <end position="72"/>
    </location>
</feature>
<feature type="strand" evidence="15">
    <location>
        <begin position="75"/>
        <end position="78"/>
    </location>
</feature>
<feature type="turn" evidence="15">
    <location>
        <begin position="95"/>
        <end position="98"/>
    </location>
</feature>
<feature type="helix" evidence="15">
    <location>
        <begin position="102"/>
        <end position="119"/>
    </location>
</feature>
<feature type="helix" evidence="15">
    <location>
        <begin position="133"/>
        <end position="140"/>
    </location>
</feature>
<feature type="strand" evidence="15">
    <location>
        <begin position="146"/>
        <end position="151"/>
    </location>
</feature>
<feature type="strand" evidence="15">
    <location>
        <begin position="164"/>
        <end position="167"/>
    </location>
</feature>
<feature type="helix" evidence="15">
    <location>
        <begin position="169"/>
        <end position="172"/>
    </location>
</feature>
<feature type="strand" evidence="15">
    <location>
        <begin position="178"/>
        <end position="183"/>
    </location>
</feature>
<feature type="strand" evidence="15">
    <location>
        <begin position="185"/>
        <end position="187"/>
    </location>
</feature>
<feature type="helix" evidence="15">
    <location>
        <begin position="201"/>
        <end position="218"/>
    </location>
</feature>
<feature type="helix" evidence="15">
    <location>
        <begin position="224"/>
        <end position="229"/>
    </location>
</feature>
<feature type="strand" evidence="15">
    <location>
        <begin position="231"/>
        <end position="236"/>
    </location>
</feature>
<feature type="helix" evidence="15">
    <location>
        <begin position="242"/>
        <end position="254"/>
    </location>
</feature>
<feature type="strand" evidence="15">
    <location>
        <begin position="259"/>
        <end position="265"/>
    </location>
</feature>
<feature type="helix" evidence="15">
    <location>
        <begin position="266"/>
        <end position="274"/>
    </location>
</feature>
<feature type="strand" evidence="15">
    <location>
        <begin position="277"/>
        <end position="284"/>
    </location>
</feature>
<feature type="strand" evidence="15">
    <location>
        <begin position="289"/>
        <end position="297"/>
    </location>
</feature>
<feature type="helix" evidence="15">
    <location>
        <begin position="301"/>
        <end position="303"/>
    </location>
</feature>
<feature type="strand" evidence="15">
    <location>
        <begin position="305"/>
        <end position="308"/>
    </location>
</feature>
<feature type="helix" evidence="15">
    <location>
        <begin position="311"/>
        <end position="324"/>
    </location>
</feature>
<feature type="helix" evidence="15">
    <location>
        <begin position="337"/>
        <end position="350"/>
    </location>
</feature>
<feature type="strand" evidence="15">
    <location>
        <begin position="361"/>
        <end position="367"/>
    </location>
</feature>
<feature type="strand" evidence="15">
    <location>
        <begin position="374"/>
        <end position="381"/>
    </location>
</feature>
<feature type="helix" evidence="15">
    <location>
        <begin position="384"/>
        <end position="390"/>
    </location>
</feature>
<feature type="turn" evidence="15">
    <location>
        <begin position="391"/>
        <end position="393"/>
    </location>
</feature>
<feature type="helix" evidence="15">
    <location>
        <begin position="395"/>
        <end position="398"/>
    </location>
</feature>
<feature type="strand" evidence="15">
    <location>
        <begin position="406"/>
        <end position="408"/>
    </location>
</feature>
<feature type="helix" evidence="15">
    <location>
        <begin position="503"/>
        <end position="506"/>
    </location>
</feature>
<feature type="helix" evidence="15">
    <location>
        <begin position="511"/>
        <end position="520"/>
    </location>
</feature>
<feature type="helix" evidence="15">
    <location>
        <begin position="525"/>
        <end position="533"/>
    </location>
</feature>
<feature type="strand" evidence="15">
    <location>
        <begin position="534"/>
        <end position="540"/>
    </location>
</feature>
<feature type="helix" evidence="15">
    <location>
        <begin position="547"/>
        <end position="558"/>
    </location>
</feature>
<feature type="helix" evidence="15">
    <location>
        <begin position="561"/>
        <end position="566"/>
    </location>
</feature>
<feature type="strand" evidence="15">
    <location>
        <begin position="571"/>
        <end position="575"/>
    </location>
</feature>
<feature type="helix" evidence="15">
    <location>
        <begin position="576"/>
        <end position="578"/>
    </location>
</feature>
<feature type="turn" evidence="15">
    <location>
        <begin position="581"/>
        <end position="583"/>
    </location>
</feature>
<feature type="helix" evidence="15">
    <location>
        <begin position="584"/>
        <end position="594"/>
    </location>
</feature>
<feature type="helix" evidence="15">
    <location>
        <begin position="596"/>
        <end position="600"/>
    </location>
</feature>
<feature type="helix" evidence="15">
    <location>
        <begin position="605"/>
        <end position="611"/>
    </location>
</feature>
<feature type="helix" evidence="15">
    <location>
        <begin position="614"/>
        <end position="619"/>
    </location>
</feature>
<comment type="function">
    <text>Plays an important role in the functional organization of mitotic chromosomes. Exhibits low basal ATPase activity, and unable to polymerize.</text>
</comment>
<comment type="function">
    <text>Proposed core component of the chromatin remodeling INO80 complex which is involved in transcriptional regulation, DNA replication and probably DNA repair. Required for the recruitment of INO80 (and probably the INO80 complex) to sites of DNA damage. Strongly prefer nucleosomes and H3-H4 tetramers over H2A-H2B dimers, suggesting it may act as a nucleosome recognition module within the complex.</text>
</comment>
<comment type="subunit">
    <text evidence="2 3 4 5 6">Component of the chromatin remodeling INO80 complex; specifically part of a complex module associated with the DBINO domain of INO80. Interacts with ACTR5; the interaction is observed in asynchronous (interphase) cells but not in metaphase-arrested cells indicative for a possible dissociation of the INO80 complex in mitotic cells. Exists as monomers and dimers, but the dimer is most probably the biologically relevant form required for stable interactions with histones that exploits the twofold symmetry of the nucleosome core.</text>
</comment>
<comment type="interaction">
    <interactant intactId="EBI-769597">
        <id>Q9H981</id>
    </interactant>
    <interactant intactId="EBI-769418">
        <id>Q9H9F9</id>
        <label>ACTR5</label>
    </interactant>
    <organismsDiffer>false</organismsDiffer>
    <experiments>3</experiments>
</comment>
<comment type="interaction">
    <interactant intactId="EBI-769597">
        <id>Q9H981</id>
    </interactant>
    <interactant intactId="EBI-1051183">
        <id>Q9Y5K5</id>
        <label>UCHL5</label>
    </interactant>
    <organismsDiffer>false</organismsDiffer>
    <experiments>4</experiments>
</comment>
<comment type="subcellular location">
    <subcellularLocation>
        <location evidence="3">Nucleus</location>
    </subcellularLocation>
    <subcellularLocation>
        <location evidence="3">Chromosome</location>
    </subcellularLocation>
    <text>Specifically localizes to mitotic chromosomes.</text>
</comment>
<comment type="alternative products">
    <event type="alternative splicing"/>
    <isoform>
        <id>Q9H981-1</id>
        <name>1</name>
        <sequence type="displayed"/>
    </isoform>
    <isoform>
        <id>Q9H981-2</id>
        <name>2</name>
        <sequence type="described" ref="VSP_040507"/>
    </isoform>
    <isoform>
        <id>Q9H981-3</id>
        <name>3</name>
        <sequence type="described" ref="VSP_040506 VSP_040508"/>
    </isoform>
</comment>
<comment type="similarity">
    <text evidence="9">Belongs to the actin family. ARP8 subfamily.</text>
</comment>
<comment type="sequence caution" evidence="9">
    <conflict type="erroneous initiation">
        <sequence resource="EMBL-CDS" id="BAB15402"/>
    </conflict>
    <text>Truncated N-terminus.</text>
</comment>
<keyword id="KW-0002">3D-structure</keyword>
<keyword id="KW-0007">Acetylation</keyword>
<keyword id="KW-0025">Alternative splicing</keyword>
<keyword id="KW-0067">ATP-binding</keyword>
<keyword id="KW-0131">Cell cycle</keyword>
<keyword id="KW-0132">Cell division</keyword>
<keyword id="KW-0158">Chromosome</keyword>
<keyword id="KW-0227">DNA damage</keyword>
<keyword id="KW-0233">DNA recombination</keyword>
<keyword id="KW-0234">DNA repair</keyword>
<keyword id="KW-0498">Mitosis</keyword>
<keyword id="KW-0547">Nucleotide-binding</keyword>
<keyword id="KW-0539">Nucleus</keyword>
<keyword id="KW-0597">Phosphoprotein</keyword>
<keyword id="KW-1267">Proteomics identification</keyword>
<keyword id="KW-1185">Reference proteome</keyword>
<keyword id="KW-0804">Transcription</keyword>
<keyword id="KW-0805">Transcription regulation</keyword>
<protein>
    <recommendedName>
        <fullName>Actin-related protein 8</fullName>
        <shortName>hArp8</shortName>
    </recommendedName>
    <alternativeName>
        <fullName>INO80 complex subunit N</fullName>
    </alternativeName>
</protein>
<proteinExistence type="evidence at protein level"/>
<dbReference type="EMBL" id="AK022996">
    <property type="protein sequence ID" value="BAB14352.1"/>
    <property type="molecule type" value="mRNA"/>
</dbReference>
<dbReference type="EMBL" id="AK094507">
    <property type="protein sequence ID" value="BAG52879.1"/>
    <property type="molecule type" value="mRNA"/>
</dbReference>
<dbReference type="EMBL" id="AK026232">
    <property type="protein sequence ID" value="BAB15402.1"/>
    <property type="status" value="ALT_INIT"/>
    <property type="molecule type" value="mRNA"/>
</dbReference>
<dbReference type="EMBL" id="AC012467">
    <property type="status" value="NOT_ANNOTATED_CDS"/>
    <property type="molecule type" value="Genomic_DNA"/>
</dbReference>
<dbReference type="EMBL" id="BC032744">
    <property type="protein sequence ID" value="AAH32744.1"/>
    <property type="molecule type" value="mRNA"/>
</dbReference>
<dbReference type="CCDS" id="CCDS2875.1">
    <molecule id="Q9H981-1"/>
</dbReference>
<dbReference type="CCDS" id="CCDS93290.1">
    <molecule id="Q9H981-2"/>
</dbReference>
<dbReference type="RefSeq" id="NP_001397703.1">
    <molecule id="Q9H981-2"/>
    <property type="nucleotide sequence ID" value="NM_001410774.1"/>
</dbReference>
<dbReference type="RefSeq" id="NP_075050.3">
    <molecule id="Q9H981-1"/>
    <property type="nucleotide sequence ID" value="NM_022899.4"/>
</dbReference>
<dbReference type="RefSeq" id="XP_005265644.1">
    <molecule id="Q9H981-1"/>
    <property type="nucleotide sequence ID" value="XM_005265587.6"/>
</dbReference>
<dbReference type="RefSeq" id="XP_011532551.1">
    <property type="nucleotide sequence ID" value="XM_011534249.2"/>
</dbReference>
<dbReference type="RefSeq" id="XP_054204422.1">
    <molecule id="Q9H981-1"/>
    <property type="nucleotide sequence ID" value="XM_054348447.1"/>
</dbReference>
<dbReference type="PDB" id="4FO0">
    <property type="method" value="X-ray"/>
    <property type="resolution" value="2.60 A"/>
    <property type="chains" value="A=34-624"/>
</dbReference>
<dbReference type="PDBsum" id="4FO0"/>
<dbReference type="SMR" id="Q9H981"/>
<dbReference type="BioGRID" id="125062">
    <property type="interactions" value="72"/>
</dbReference>
<dbReference type="ComplexPortal" id="CPX-846">
    <property type="entry name" value="INO80 chromatin remodeling complex"/>
</dbReference>
<dbReference type="CORUM" id="Q9H981"/>
<dbReference type="FunCoup" id="Q9H981">
    <property type="interactions" value="3447"/>
</dbReference>
<dbReference type="IntAct" id="Q9H981">
    <property type="interactions" value="38"/>
</dbReference>
<dbReference type="MINT" id="Q9H981"/>
<dbReference type="STRING" id="9606.ENSP00000336842"/>
<dbReference type="GlyGen" id="Q9H981">
    <property type="glycosylation" value="1 site, 1 N-linked glycan (1 site)"/>
</dbReference>
<dbReference type="iPTMnet" id="Q9H981"/>
<dbReference type="PhosphoSitePlus" id="Q9H981"/>
<dbReference type="BioMuta" id="ACTR8"/>
<dbReference type="DMDM" id="116241257"/>
<dbReference type="jPOST" id="Q9H981"/>
<dbReference type="MassIVE" id="Q9H981"/>
<dbReference type="PaxDb" id="9606-ENSP00000336842"/>
<dbReference type="PeptideAtlas" id="Q9H981"/>
<dbReference type="ProteomicsDB" id="81292">
    <molecule id="Q9H981-1"/>
</dbReference>
<dbReference type="ProteomicsDB" id="81293">
    <molecule id="Q9H981-2"/>
</dbReference>
<dbReference type="ProteomicsDB" id="81294">
    <molecule id="Q9H981-3"/>
</dbReference>
<dbReference type="Pumba" id="Q9H981"/>
<dbReference type="Antibodypedia" id="31436">
    <property type="antibodies" value="50 antibodies from 15 providers"/>
</dbReference>
<dbReference type="DNASU" id="93973"/>
<dbReference type="Ensembl" id="ENST00000335754.8">
    <molecule id="Q9H981-1"/>
    <property type="protein sequence ID" value="ENSP00000336842.3"/>
    <property type="gene ID" value="ENSG00000113812.14"/>
</dbReference>
<dbReference type="Ensembl" id="ENST00000482349.5">
    <molecule id="Q9H981-2"/>
    <property type="protein sequence ID" value="ENSP00000419429.1"/>
    <property type="gene ID" value="ENSG00000113812.14"/>
</dbReference>
<dbReference type="GeneID" id="93973"/>
<dbReference type="KEGG" id="hsa:93973"/>
<dbReference type="MANE-Select" id="ENST00000335754.8">
    <property type="protein sequence ID" value="ENSP00000336842.3"/>
    <property type="RefSeq nucleotide sequence ID" value="NM_022899.5"/>
    <property type="RefSeq protein sequence ID" value="NP_075050.3"/>
</dbReference>
<dbReference type="UCSC" id="uc003dhc.5">
    <molecule id="Q9H981-1"/>
    <property type="organism name" value="human"/>
</dbReference>
<dbReference type="AGR" id="HGNC:14672"/>
<dbReference type="CTD" id="93973"/>
<dbReference type="GeneCards" id="ACTR8"/>
<dbReference type="HGNC" id="HGNC:14672">
    <property type="gene designation" value="ACTR8"/>
</dbReference>
<dbReference type="HPA" id="ENSG00000113812">
    <property type="expression patterns" value="Low tissue specificity"/>
</dbReference>
<dbReference type="MIM" id="619716">
    <property type="type" value="gene"/>
</dbReference>
<dbReference type="neXtProt" id="NX_Q9H981"/>
<dbReference type="OpenTargets" id="ENSG00000113812"/>
<dbReference type="PharmGKB" id="PA24491"/>
<dbReference type="VEuPathDB" id="HostDB:ENSG00000113812"/>
<dbReference type="eggNOG" id="KOG0797">
    <property type="taxonomic scope" value="Eukaryota"/>
</dbReference>
<dbReference type="GeneTree" id="ENSGT00390000001763"/>
<dbReference type="HOGENOM" id="CLU_006974_1_0_1"/>
<dbReference type="InParanoid" id="Q9H981"/>
<dbReference type="OMA" id="AYKCMWA"/>
<dbReference type="OrthoDB" id="5572108at2759"/>
<dbReference type="PAN-GO" id="Q9H981">
    <property type="GO annotations" value="3 GO annotations based on evolutionary models"/>
</dbReference>
<dbReference type="PhylomeDB" id="Q9H981"/>
<dbReference type="TreeFam" id="TF324575"/>
<dbReference type="PathwayCommons" id="Q9H981"/>
<dbReference type="Reactome" id="R-HSA-5689603">
    <property type="pathway name" value="UCH proteinases"/>
</dbReference>
<dbReference type="Reactome" id="R-HSA-5696394">
    <property type="pathway name" value="DNA Damage Recognition in GG-NER"/>
</dbReference>
<dbReference type="SignaLink" id="Q9H981"/>
<dbReference type="SIGNOR" id="Q9H981"/>
<dbReference type="BioGRID-ORCS" id="93973">
    <property type="hits" value="525 hits in 1165 CRISPR screens"/>
</dbReference>
<dbReference type="ChiTaRS" id="ACTR8">
    <property type="organism name" value="human"/>
</dbReference>
<dbReference type="EvolutionaryTrace" id="Q9H981"/>
<dbReference type="GenomeRNAi" id="93973"/>
<dbReference type="Pharos" id="Q9H981">
    <property type="development level" value="Tbio"/>
</dbReference>
<dbReference type="PRO" id="PR:Q9H981"/>
<dbReference type="Proteomes" id="UP000005640">
    <property type="component" value="Chromosome 3"/>
</dbReference>
<dbReference type="RNAct" id="Q9H981">
    <property type="molecule type" value="protein"/>
</dbReference>
<dbReference type="Bgee" id="ENSG00000113812">
    <property type="expression patterns" value="Expressed in stromal cell of endometrium and 178 other cell types or tissues"/>
</dbReference>
<dbReference type="ExpressionAtlas" id="Q9H981">
    <property type="expression patterns" value="baseline and differential"/>
</dbReference>
<dbReference type="GO" id="GO:0005813">
    <property type="term" value="C:centrosome"/>
    <property type="evidence" value="ECO:0000314"/>
    <property type="project" value="HPA"/>
</dbReference>
<dbReference type="GO" id="GO:0031011">
    <property type="term" value="C:Ino80 complex"/>
    <property type="evidence" value="ECO:0000314"/>
    <property type="project" value="UniProtKB"/>
</dbReference>
<dbReference type="GO" id="GO:0005654">
    <property type="term" value="C:nucleoplasm"/>
    <property type="evidence" value="ECO:0000314"/>
    <property type="project" value="HPA"/>
</dbReference>
<dbReference type="GO" id="GO:0005634">
    <property type="term" value="C:nucleus"/>
    <property type="evidence" value="ECO:0000314"/>
    <property type="project" value="UniProtKB"/>
</dbReference>
<dbReference type="GO" id="GO:0005524">
    <property type="term" value="F:ATP binding"/>
    <property type="evidence" value="ECO:0007669"/>
    <property type="project" value="UniProtKB-KW"/>
</dbReference>
<dbReference type="GO" id="GO:0051301">
    <property type="term" value="P:cell division"/>
    <property type="evidence" value="ECO:0007669"/>
    <property type="project" value="UniProtKB-KW"/>
</dbReference>
<dbReference type="GO" id="GO:0006338">
    <property type="term" value="P:chromatin remodeling"/>
    <property type="evidence" value="ECO:0000314"/>
    <property type="project" value="ComplexPortal"/>
</dbReference>
<dbReference type="GO" id="GO:0006310">
    <property type="term" value="P:DNA recombination"/>
    <property type="evidence" value="ECO:0007669"/>
    <property type="project" value="UniProtKB-KW"/>
</dbReference>
<dbReference type="GO" id="GO:0006302">
    <property type="term" value="P:double-strand break repair"/>
    <property type="evidence" value="ECO:0000318"/>
    <property type="project" value="GO_Central"/>
</dbReference>
<dbReference type="GO" id="GO:0045739">
    <property type="term" value="P:positive regulation of DNA repair"/>
    <property type="evidence" value="ECO:0000266"/>
    <property type="project" value="ComplexPortal"/>
</dbReference>
<dbReference type="GO" id="GO:0045893">
    <property type="term" value="P:positive regulation of DNA-templated transcription"/>
    <property type="evidence" value="ECO:0000315"/>
    <property type="project" value="ComplexPortal"/>
</dbReference>
<dbReference type="GO" id="GO:1904507">
    <property type="term" value="P:positive regulation of telomere maintenance in response to DNA damage"/>
    <property type="evidence" value="ECO:0000266"/>
    <property type="project" value="ComplexPortal"/>
</dbReference>
<dbReference type="GO" id="GO:0051726">
    <property type="term" value="P:regulation of cell cycle"/>
    <property type="evidence" value="ECO:0000315"/>
    <property type="project" value="ComplexPortal"/>
</dbReference>
<dbReference type="GO" id="GO:0033044">
    <property type="term" value="P:regulation of chromosome organization"/>
    <property type="evidence" value="ECO:0000315"/>
    <property type="project" value="ComplexPortal"/>
</dbReference>
<dbReference type="GO" id="GO:0006282">
    <property type="term" value="P:regulation of DNA repair"/>
    <property type="evidence" value="ECO:0000266"/>
    <property type="project" value="ComplexPortal"/>
</dbReference>
<dbReference type="GO" id="GO:0006275">
    <property type="term" value="P:regulation of DNA replication"/>
    <property type="evidence" value="ECO:0000315"/>
    <property type="project" value="ComplexPortal"/>
</dbReference>
<dbReference type="GO" id="GO:0060382">
    <property type="term" value="P:regulation of DNA strand elongation"/>
    <property type="evidence" value="ECO:0000315"/>
    <property type="project" value="ComplexPortal"/>
</dbReference>
<dbReference type="GO" id="GO:0006355">
    <property type="term" value="P:regulation of DNA-templated transcription"/>
    <property type="evidence" value="ECO:0000318"/>
    <property type="project" value="GO_Central"/>
</dbReference>
<dbReference type="GO" id="GO:0045995">
    <property type="term" value="P:regulation of embryonic development"/>
    <property type="evidence" value="ECO:0000266"/>
    <property type="project" value="ComplexPortal"/>
</dbReference>
<dbReference type="GO" id="GO:0000723">
    <property type="term" value="P:telomere maintenance"/>
    <property type="evidence" value="ECO:0000266"/>
    <property type="project" value="ComplexPortal"/>
</dbReference>
<dbReference type="CDD" id="cd10206">
    <property type="entry name" value="ASKHA_NBD_Arp8-like"/>
    <property type="match status" value="1"/>
</dbReference>
<dbReference type="DisProt" id="DP00873"/>
<dbReference type="FunFam" id="3.30.420.40:FF:000100">
    <property type="entry name" value="Actin-related protein 8"/>
    <property type="match status" value="1"/>
</dbReference>
<dbReference type="FunFam" id="3.30.420.40:FF:000134">
    <property type="entry name" value="Actin-related protein 8"/>
    <property type="match status" value="1"/>
</dbReference>
<dbReference type="FunFam" id="3.90.640.10:FF:000020">
    <property type="entry name" value="Actin-related protein 8"/>
    <property type="match status" value="1"/>
</dbReference>
<dbReference type="Gene3D" id="2.30.36.90">
    <property type="match status" value="1"/>
</dbReference>
<dbReference type="Gene3D" id="3.30.420.40">
    <property type="match status" value="2"/>
</dbReference>
<dbReference type="Gene3D" id="3.90.640.10">
    <property type="entry name" value="Actin, Chain A, domain 4"/>
    <property type="match status" value="1"/>
</dbReference>
<dbReference type="InterPro" id="IPR004000">
    <property type="entry name" value="Actin"/>
</dbReference>
<dbReference type="InterPro" id="IPR043129">
    <property type="entry name" value="ATPase_NBD"/>
</dbReference>
<dbReference type="PANTHER" id="PTHR11937">
    <property type="entry name" value="ACTIN"/>
    <property type="match status" value="1"/>
</dbReference>
<dbReference type="Pfam" id="PF00022">
    <property type="entry name" value="Actin"/>
    <property type="match status" value="2"/>
</dbReference>
<dbReference type="SMART" id="SM00268">
    <property type="entry name" value="ACTIN"/>
    <property type="match status" value="1"/>
</dbReference>
<dbReference type="SUPFAM" id="SSF53067">
    <property type="entry name" value="Actin-like ATPase domain"/>
    <property type="match status" value="2"/>
</dbReference>
<sequence>MTQAEKGDTENGKEKGGEKEKEQRGVKRPIVPALVPESLQEQIQSNFIIVIHPGSTTLRIGRATDTLPASIPHVIARRHKQQGQPLYKDSWLLREGLNKPESNEQRQNGLKMVDQAIWSKKMSNGTRRIPVSPEQARSYNKQMRPAILDHCSGNKWTNTSHHPEYLVGEEALYVNPLDCYNIHWPIRRGQLNIHPGPGGSLTAVLADIEVIWSHAIQKYLEIPLKDLKYYRCILLIPDIYNKQHVKELVNMILMKMGFSGIVVHQESVCATYGSGLSSTCIVDVGDQKTSVCCVEDGVSHRNTRLCLAYGGSDVSRCFYWLMQRAGFPYRECQLTNKMDCLLLQHLKETFCHLDQDISGLQDHEFQIRHPDSPALLYQFRLGDEKLQAPMALFYPATFGIVGQKMTTLQHRSQGDPEDPHDEHYLLATQSKQEQSAKATADRKSASKPIGFEGDLRGQSSDLPERLHSQEVDLGSAQGDGLMAGNDSEEALTALMSRKTAISLFEGKALGLDKAILHSIDCCSSDDTKKKMYSSILVVGGGLMFHKAQEFLQHRILNKMPPSFRRIIENVDVITRPKDMDPRLIAWKGGAVLACLDTTQELWIYQREWQRFGVRMLRERAAFVW</sequence>